<feature type="chain" id="PRO_0000247838" description="E3 ubiquitin-protein ligase RNF133">
    <location>
        <begin position="1"/>
        <end position="376"/>
    </location>
</feature>
<feature type="transmembrane region" description="Helical" evidence="3">
    <location>
        <begin position="190"/>
        <end position="210"/>
    </location>
</feature>
<feature type="domain" description="PA">
    <location>
        <begin position="65"/>
        <end position="167"/>
    </location>
</feature>
<feature type="zinc finger region" description="RING-type; atypical" evidence="4">
    <location>
        <begin position="256"/>
        <end position="297"/>
    </location>
</feature>
<feature type="region of interest" description="Disordered" evidence="5">
    <location>
        <begin position="328"/>
        <end position="376"/>
    </location>
</feature>
<feature type="compositionally biased region" description="Polar residues" evidence="5">
    <location>
        <begin position="355"/>
        <end position="366"/>
    </location>
</feature>
<feature type="sequence conflict" description="In Ref. 1; BAB63003." evidence="6" ref="1">
    <original>H</original>
    <variation>L</variation>
    <location>
        <position position="262"/>
    </location>
</feature>
<feature type="sequence conflict" description="In Ref. 1; BAB63003." evidence="6" ref="1">
    <original>I</original>
    <variation>F</variation>
    <location>
        <position position="306"/>
    </location>
</feature>
<evidence type="ECO:0000250" key="1">
    <source>
        <dbReference type="UniProtKB" id="Q14B02"/>
    </source>
</evidence>
<evidence type="ECO:0000250" key="2">
    <source>
        <dbReference type="UniProtKB" id="Q8WVZ7"/>
    </source>
</evidence>
<evidence type="ECO:0000255" key="3"/>
<evidence type="ECO:0000255" key="4">
    <source>
        <dbReference type="PROSITE-ProRule" id="PRU00175"/>
    </source>
</evidence>
<evidence type="ECO:0000256" key="5">
    <source>
        <dbReference type="SAM" id="MobiDB-lite"/>
    </source>
</evidence>
<evidence type="ECO:0000305" key="6"/>
<keyword id="KW-0256">Endoplasmic reticulum</keyword>
<keyword id="KW-0472">Membrane</keyword>
<keyword id="KW-0479">Metal-binding</keyword>
<keyword id="KW-1185">Reference proteome</keyword>
<keyword id="KW-0808">Transferase</keyword>
<keyword id="KW-0812">Transmembrane</keyword>
<keyword id="KW-1133">Transmembrane helix</keyword>
<keyword id="KW-0832">Ubl conjugation</keyword>
<keyword id="KW-0833">Ubl conjugation pathway</keyword>
<keyword id="KW-0862">Zinc</keyword>
<keyword id="KW-0863">Zinc-finger</keyword>
<name>RN133_MACFA</name>
<accession>Q95K04</accession>
<accession>Q95JW9</accession>
<comment type="function">
    <text evidence="1 2">Has E3 ubiquitin-protein ligase activity. Plays a role in male fecundity through the interaction with the E2 ubituitin-protein ligase UBE2J1.</text>
</comment>
<comment type="catalytic activity">
    <reaction evidence="1">
        <text>S-ubiquitinyl-[E2 ubiquitin-conjugating enzyme]-L-cysteine + [acceptor protein]-L-lysine = [E2 ubiquitin-conjugating enzyme]-L-cysteine + N(6)-ubiquitinyl-[acceptor protein]-L-lysine.</text>
        <dbReference type="EC" id="2.3.2.27"/>
    </reaction>
</comment>
<comment type="pathway">
    <text evidence="1">Protein modification; protein ubiquitination.</text>
</comment>
<comment type="subunit">
    <text evidence="2">Interacts with E3 ligase UBE2J1.</text>
</comment>
<comment type="subcellular location">
    <subcellularLocation>
        <location evidence="1">Endoplasmic reticulum membrane</location>
        <topology evidence="1">Single-pass membrane protein</topology>
    </subcellularLocation>
</comment>
<comment type="PTM">
    <text evidence="1">Auto-ubiquitinated.</text>
</comment>
<gene>
    <name type="primary">RNF133</name>
    <name type="ORF">QtsA-11567</name>
    <name type="ORF">QtsA-13332</name>
</gene>
<proteinExistence type="evidence at transcript level"/>
<dbReference type="EC" id="2.3.2.27" evidence="1"/>
<dbReference type="EMBL" id="AB070058">
    <property type="protein sequence ID" value="BAB63003.1"/>
    <property type="molecule type" value="mRNA"/>
</dbReference>
<dbReference type="EMBL" id="AB070023">
    <property type="protein sequence ID" value="BAB62968.1"/>
    <property type="molecule type" value="mRNA"/>
</dbReference>
<dbReference type="RefSeq" id="NP_001306501.1">
    <property type="nucleotide sequence ID" value="NM_001319572.1"/>
</dbReference>
<dbReference type="RefSeq" id="XP_065398588.1">
    <property type="nucleotide sequence ID" value="XM_065542516.1"/>
</dbReference>
<dbReference type="SMR" id="Q95K04"/>
<dbReference type="GeneID" id="102146898"/>
<dbReference type="eggNOG" id="KOG4628">
    <property type="taxonomic scope" value="Eukaryota"/>
</dbReference>
<dbReference type="UniPathway" id="UPA00143"/>
<dbReference type="Proteomes" id="UP000233100">
    <property type="component" value="Unplaced"/>
</dbReference>
<dbReference type="GO" id="GO:0005789">
    <property type="term" value="C:endoplasmic reticulum membrane"/>
    <property type="evidence" value="ECO:0007669"/>
    <property type="project" value="UniProtKB-SubCell"/>
</dbReference>
<dbReference type="GO" id="GO:0016740">
    <property type="term" value="F:transferase activity"/>
    <property type="evidence" value="ECO:0007669"/>
    <property type="project" value="UniProtKB-KW"/>
</dbReference>
<dbReference type="GO" id="GO:0008270">
    <property type="term" value="F:zinc ion binding"/>
    <property type="evidence" value="ECO:0007669"/>
    <property type="project" value="UniProtKB-KW"/>
</dbReference>
<dbReference type="GO" id="GO:0016567">
    <property type="term" value="P:protein ubiquitination"/>
    <property type="evidence" value="ECO:0007669"/>
    <property type="project" value="UniProtKB-UniPathway"/>
</dbReference>
<dbReference type="CDD" id="cd02122">
    <property type="entry name" value="PA_GRAIL_like"/>
    <property type="match status" value="1"/>
</dbReference>
<dbReference type="CDD" id="cd16802">
    <property type="entry name" value="RING-H2_RNF128-like"/>
    <property type="match status" value="1"/>
</dbReference>
<dbReference type="FunFam" id="3.50.30.30:FF:000003">
    <property type="entry name" value="E3 ubiquitin-protein ligase RNF128"/>
    <property type="match status" value="1"/>
</dbReference>
<dbReference type="FunFam" id="3.30.40.10:FF:000009">
    <property type="entry name" value="E3 ubiquitin-protein ligase RNF130"/>
    <property type="match status" value="1"/>
</dbReference>
<dbReference type="Gene3D" id="3.50.30.30">
    <property type="match status" value="1"/>
</dbReference>
<dbReference type="Gene3D" id="3.30.40.10">
    <property type="entry name" value="Zinc/RING finger domain, C3HC4 (zinc finger)"/>
    <property type="match status" value="1"/>
</dbReference>
<dbReference type="InterPro" id="IPR046450">
    <property type="entry name" value="PA_dom_sf"/>
</dbReference>
<dbReference type="InterPro" id="IPR003137">
    <property type="entry name" value="PA_domain"/>
</dbReference>
<dbReference type="InterPro" id="IPR001841">
    <property type="entry name" value="Znf_RING"/>
</dbReference>
<dbReference type="InterPro" id="IPR013083">
    <property type="entry name" value="Znf_RING/FYVE/PHD"/>
</dbReference>
<dbReference type="PANTHER" id="PTHR46539">
    <property type="entry name" value="E3 UBIQUITIN-PROTEIN LIGASE ATL42"/>
    <property type="match status" value="1"/>
</dbReference>
<dbReference type="PANTHER" id="PTHR46539:SF27">
    <property type="entry name" value="RING FINGER PROTEIN 128"/>
    <property type="match status" value="1"/>
</dbReference>
<dbReference type="Pfam" id="PF02225">
    <property type="entry name" value="PA"/>
    <property type="match status" value="1"/>
</dbReference>
<dbReference type="Pfam" id="PF13639">
    <property type="entry name" value="zf-RING_2"/>
    <property type="match status" value="1"/>
</dbReference>
<dbReference type="SMART" id="SM00184">
    <property type="entry name" value="RING"/>
    <property type="match status" value="1"/>
</dbReference>
<dbReference type="SUPFAM" id="SSF52025">
    <property type="entry name" value="PA domain"/>
    <property type="match status" value="1"/>
</dbReference>
<dbReference type="SUPFAM" id="SSF57850">
    <property type="entry name" value="RING/U-box"/>
    <property type="match status" value="1"/>
</dbReference>
<dbReference type="PROSITE" id="PS50089">
    <property type="entry name" value="ZF_RING_2"/>
    <property type="match status" value="1"/>
</dbReference>
<reference key="1">
    <citation type="submission" date="2001-08" db="EMBL/GenBank/DDBJ databases">
        <title>Isolation of novel full-length cDNA clones from macaque testis cDNA libraries.</title>
        <authorList>
            <person name="Hashimoto K."/>
            <person name="Osada N."/>
            <person name="Hida M."/>
            <person name="Kusuda J."/>
            <person name="Tanuma R."/>
            <person name="Hirai M."/>
            <person name="Terao K."/>
            <person name="Sugano S."/>
        </authorList>
    </citation>
    <scope>NUCLEOTIDE SEQUENCE [LARGE SCALE MRNA]</scope>
    <source>
        <tissue>Testis</tissue>
    </source>
</reference>
<reference key="2">
    <citation type="journal article" date="2002" name="BMC Genomics">
        <title>Cynomolgus monkey testicular cDNAs for discovery of novel human genes in the human genome sequence.</title>
        <authorList>
            <person name="Osada N."/>
            <person name="Hida M."/>
            <person name="Kusuda J."/>
            <person name="Tanuma R."/>
            <person name="Hirata M."/>
            <person name="Suto Y."/>
            <person name="Hirai M."/>
            <person name="Terao K."/>
            <person name="Sugano S."/>
            <person name="Hashimoto K."/>
        </authorList>
    </citation>
    <scope>NUCLEOTIDE SEQUENCE [LARGE SCALE MRNA]</scope>
    <source>
        <tissue>Testis</tissue>
    </source>
</reference>
<organism>
    <name type="scientific">Macaca fascicularis</name>
    <name type="common">Crab-eating macaque</name>
    <name type="synonym">Cynomolgus monkey</name>
    <dbReference type="NCBI Taxonomy" id="9541"/>
    <lineage>
        <taxon>Eukaryota</taxon>
        <taxon>Metazoa</taxon>
        <taxon>Chordata</taxon>
        <taxon>Craniata</taxon>
        <taxon>Vertebrata</taxon>
        <taxon>Euteleostomi</taxon>
        <taxon>Mammalia</taxon>
        <taxon>Eutheria</taxon>
        <taxon>Euarchontoglires</taxon>
        <taxon>Primates</taxon>
        <taxon>Haplorrhini</taxon>
        <taxon>Catarrhini</taxon>
        <taxon>Cercopithecidae</taxon>
        <taxon>Cercopithecinae</taxon>
        <taxon>Macaca</taxon>
    </lineage>
</organism>
<protein>
    <recommendedName>
        <fullName>E3 ubiquitin-protein ligase RNF133</fullName>
        <ecNumber evidence="1">2.3.2.27</ecNumber>
    </recommendedName>
    <alternativeName>
        <fullName>RING finger protein 133</fullName>
    </alternativeName>
    <alternativeName>
        <fullName evidence="6">RING-type E3 ubiquitin transferase RNF133</fullName>
    </alternativeName>
</protein>
<sequence length="376" mass="42239">MHLLKVGTWRNNTAFSWLIMFGVLWLVSQNCCRASVVWTAYMNISFHVGNHVLSELGETGVFGRSSTLKRVAGVIVPPEGKIQNACNPNTIFSRSKYSETWLALIERGGCTFTQKIKVAAEKGASGVIIYNFPGTGNQVFPMFHQAFEDVVVVMIGNLKGTEIFHLIKKGVLITAMVEVGRKHIIWMNHYLVSFVIVTTATLAYFIFYHIHRLCLARIQNRRWQRLTTDLQNAFGQLQLRVVKEGDEEINPNGDSCVICFEHYKPNDIVRILTCKHFFHKNCIDPWILSHGTCPICKCDILKVLGIQVDVENGTEPLQVLMSSELCETLSPSEEETNNEVSPAGTSDKVIHVEENPTSQNNDSQPHSVVEDVHPSP</sequence>